<evidence type="ECO:0000250" key="1">
    <source>
        <dbReference type="UniProtKB" id="P12425"/>
    </source>
</evidence>
<evidence type="ECO:0000250" key="2">
    <source>
        <dbReference type="UniProtKB" id="P15623"/>
    </source>
</evidence>
<evidence type="ECO:0000250" key="3">
    <source>
        <dbReference type="UniProtKB" id="P77961"/>
    </source>
</evidence>
<evidence type="ECO:0000250" key="4">
    <source>
        <dbReference type="UniProtKB" id="P9WN39"/>
    </source>
</evidence>
<evidence type="ECO:0000255" key="5">
    <source>
        <dbReference type="PROSITE-ProRule" id="PRU01330"/>
    </source>
</evidence>
<evidence type="ECO:0000255" key="6">
    <source>
        <dbReference type="PROSITE-ProRule" id="PRU01331"/>
    </source>
</evidence>
<evidence type="ECO:0000303" key="7">
    <source>
    </source>
</evidence>
<evidence type="ECO:0000305" key="8"/>
<evidence type="ECO:0000305" key="9">
    <source>
    </source>
</evidence>
<comment type="function">
    <text evidence="2">Catalyzes the ATP-dependent biosynthesis of glutamine from glutamate and ammonia.</text>
</comment>
<comment type="catalytic activity">
    <reaction evidence="2">
        <text>L-glutamate + NH4(+) + ATP = L-glutamine + ADP + phosphate + H(+)</text>
        <dbReference type="Rhea" id="RHEA:16169"/>
        <dbReference type="ChEBI" id="CHEBI:15378"/>
        <dbReference type="ChEBI" id="CHEBI:28938"/>
        <dbReference type="ChEBI" id="CHEBI:29985"/>
        <dbReference type="ChEBI" id="CHEBI:30616"/>
        <dbReference type="ChEBI" id="CHEBI:43474"/>
        <dbReference type="ChEBI" id="CHEBI:58359"/>
        <dbReference type="ChEBI" id="CHEBI:456216"/>
        <dbReference type="EC" id="6.3.1.2"/>
    </reaction>
</comment>
<comment type="cofactor">
    <cofactor evidence="1">
        <name>Mg(2+)</name>
        <dbReference type="ChEBI" id="CHEBI:18420"/>
    </cofactor>
    <text evidence="1">Binds 2 Mg(2+) ions per subunit.</text>
</comment>
<comment type="activity regulation">
    <text evidence="9">The activity of this enzyme is not controlled by adenylation.</text>
</comment>
<comment type="subunit">
    <text evidence="2">Homohexamer.</text>
</comment>
<comment type="subcellular location">
    <subcellularLocation>
        <location evidence="2">Cytoplasm</location>
    </subcellularLocation>
</comment>
<comment type="similarity">
    <text evidence="2">Belongs to the glutamine synthetase family.</text>
</comment>
<keyword id="KW-0067">ATP-binding</keyword>
<keyword id="KW-0963">Cytoplasm</keyword>
<keyword id="KW-0436">Ligase</keyword>
<keyword id="KW-0460">Magnesium</keyword>
<keyword id="KW-0479">Metal-binding</keyword>
<keyword id="KW-0547">Nucleotide-binding</keyword>
<sequence>MIEASKLTTEFGSLVFNDKIMKERLPKDIYKAVHKTIEKEPHLEPGCSYSCSSNHEGVGNREQCYHFTPPGSSPMTGLTAEKHDSFISPTEDGRSSWSSQEKSWLRANLMHQASQWWSSCHNSSMRGYQHGILHHHAFIKDGSLLLPTAFCSYGGEALDRDSLLRSMEALSNEAVKMMRLLGYEDVNRVNTTIGSEQEYFLIDKDFYKKRKDLLLTGRTLIGAPASKGQEMEDHYFGVIKPKVSAYMHDLDEELWKLGIPAKTKHNEVAPSQHELAPVFETANIAVDHNQLTMEVMKKVADKHNYACLLHEKPFEGVNGSGKHNNWSICTDTGINLLDPGKNPGENIPFLVFLMSVIAAVDEYAPILRLSVASAGNDHRLGGNEAPPAIISIFVGDELAEVLKAVEAGEAYKAAGKSQMTWEQQYFTFTKDNTDRNRTSPFAFTGNKFESDGGHSSVANGKYGPQHMQLQKEVATLNAKLSAYSGDELKEKVKEVLKETLLAHKRVLFNGNGYTDEWVEEAAKRGLPNLKALPDCMPYWISDESIDLFTRHGIFTKEEIYSRYEILLENYSKSIHIESLTMQEMIRKDLTEGLVAYEKDLSKEIVQKKSLLDGDCCALELGVLKSLDKSSAEMGKALSKLFEDTKKAEGMTEALETASYYESTVLADMDELRKYADEAEALIPEKYLSYPTYGEMLFSLR</sequence>
<feature type="chain" id="PRO_0000153278" description="Glutamine synthetase">
    <location>
        <begin position="1"/>
        <end position="700"/>
    </location>
</feature>
<feature type="domain" description="GS beta-grasp" evidence="5">
    <location>
        <begin position="65"/>
        <end position="155"/>
    </location>
</feature>
<feature type="domain" description="GS catalytic" evidence="6">
    <location>
        <begin position="159"/>
        <end position="589"/>
    </location>
</feature>
<feature type="binding site" evidence="1">
    <location>
        <position position="196"/>
    </location>
    <ligand>
        <name>Mg(2+)</name>
        <dbReference type="ChEBI" id="CHEBI:18420"/>
        <label>1</label>
    </ligand>
</feature>
<feature type="binding site" evidence="1">
    <location>
        <position position="198"/>
    </location>
    <ligand>
        <name>Mg(2+)</name>
        <dbReference type="ChEBI" id="CHEBI:18420"/>
        <label>2</label>
    </ligand>
</feature>
<feature type="binding site" evidence="1">
    <location>
        <position position="267"/>
    </location>
    <ligand>
        <name>Mg(2+)</name>
        <dbReference type="ChEBI" id="CHEBI:18420"/>
        <label>2</label>
    </ligand>
</feature>
<feature type="binding site" evidence="1">
    <location>
        <position position="274"/>
    </location>
    <ligand>
        <name>Mg(2+)</name>
        <dbReference type="ChEBI" id="CHEBI:18420"/>
        <label>2</label>
    </ligand>
</feature>
<feature type="binding site" evidence="4">
    <location>
        <begin position="318"/>
        <end position="319"/>
    </location>
    <ligand>
        <name>L-glutamate</name>
        <dbReference type="ChEBI" id="CHEBI:29985"/>
    </ligand>
</feature>
<feature type="binding site" evidence="1">
    <location>
        <position position="319"/>
    </location>
    <ligand>
        <name>L-glutamate</name>
        <dbReference type="ChEBI" id="CHEBI:29985"/>
    </ligand>
</feature>
<feature type="binding site" evidence="1">
    <location>
        <position position="323"/>
    </location>
    <ligand>
        <name>Mg(2+)</name>
        <dbReference type="ChEBI" id="CHEBI:18420"/>
        <label>1</label>
    </ligand>
</feature>
<feature type="binding site" evidence="3">
    <location>
        <position position="327"/>
    </location>
    <ligand>
        <name>ATP</name>
        <dbReference type="ChEBI" id="CHEBI:30616"/>
    </ligand>
</feature>
<feature type="binding site" evidence="4">
    <location>
        <position position="435"/>
    </location>
    <ligand>
        <name>ATP</name>
        <dbReference type="ChEBI" id="CHEBI:30616"/>
    </ligand>
</feature>
<feature type="binding site" evidence="4">
    <location>
        <position position="435"/>
    </location>
    <ligand>
        <name>L-glutamate</name>
        <dbReference type="ChEBI" id="CHEBI:29985"/>
    </ligand>
</feature>
<feature type="binding site" evidence="1">
    <location>
        <position position="472"/>
    </location>
    <ligand>
        <name>Mg(2+)</name>
        <dbReference type="ChEBI" id="CHEBI:18420"/>
        <label>1</label>
    </ligand>
</feature>
<gene>
    <name evidence="7" type="primary">glnA</name>
</gene>
<name>GLNA3_BUTFI</name>
<organism>
    <name type="scientific">Butyrivibrio fibrisolvens</name>
    <dbReference type="NCBI Taxonomy" id="831"/>
    <lineage>
        <taxon>Bacteria</taxon>
        <taxon>Bacillati</taxon>
        <taxon>Bacillota</taxon>
        <taxon>Clostridia</taxon>
        <taxon>Lachnospirales</taxon>
        <taxon>Lachnospiraceae</taxon>
        <taxon>Butyrivibrio</taxon>
    </lineage>
</organism>
<protein>
    <recommendedName>
        <fullName evidence="7">Glutamine synthetase</fullName>
        <shortName evidence="7">GS</shortName>
        <ecNumber evidence="2">6.3.1.2</ecNumber>
    </recommendedName>
    <alternativeName>
        <fullName evidence="8">Glutamate--ammonia ligase</fullName>
    </alternativeName>
    <alternativeName>
        <fullName evidence="7">Glutamine synthetase III</fullName>
        <shortName evidence="7">GSIII</shortName>
    </alternativeName>
</protein>
<reference key="1">
    <citation type="journal article" date="1993" name="J. Gen. Microbiol.">
        <title>Cloning and nucleotide sequence of the Butyrivibrio fibrisolvens gene encoding a type III glutamine synthetase.</title>
        <authorList>
            <person name="Goodman H.J."/>
            <person name="Woods D.R."/>
        </authorList>
    </citation>
    <scope>NUCLEOTIDE SEQUENCE [GENOMIC DNA]</scope>
    <scope>ACTIVITY REGULATION</scope>
    <source>
        <strain>H17C</strain>
    </source>
</reference>
<proteinExistence type="inferred from homology"/>
<accession>Q05650</accession>
<dbReference type="EC" id="6.3.1.2" evidence="2"/>
<dbReference type="EMBL" id="L08256">
    <property type="protein sequence ID" value="AAA71923.1"/>
    <property type="molecule type" value="Unassigned_DNA"/>
</dbReference>
<dbReference type="PIR" id="I40596">
    <property type="entry name" value="I40596"/>
</dbReference>
<dbReference type="SMR" id="Q05650"/>
<dbReference type="GO" id="GO:0005737">
    <property type="term" value="C:cytoplasm"/>
    <property type="evidence" value="ECO:0007669"/>
    <property type="project" value="UniProtKB-SubCell"/>
</dbReference>
<dbReference type="GO" id="GO:0005524">
    <property type="term" value="F:ATP binding"/>
    <property type="evidence" value="ECO:0007669"/>
    <property type="project" value="UniProtKB-KW"/>
</dbReference>
<dbReference type="GO" id="GO:0004356">
    <property type="term" value="F:glutamine synthetase activity"/>
    <property type="evidence" value="ECO:0007669"/>
    <property type="project" value="UniProtKB-EC"/>
</dbReference>
<dbReference type="GO" id="GO:0046872">
    <property type="term" value="F:metal ion binding"/>
    <property type="evidence" value="ECO:0007669"/>
    <property type="project" value="UniProtKB-KW"/>
</dbReference>
<dbReference type="GO" id="GO:0006542">
    <property type="term" value="P:glutamine biosynthetic process"/>
    <property type="evidence" value="ECO:0007669"/>
    <property type="project" value="InterPro"/>
</dbReference>
<dbReference type="Gene3D" id="1.20.120.1560">
    <property type="match status" value="1"/>
</dbReference>
<dbReference type="Gene3D" id="3.30.590.10">
    <property type="entry name" value="Glutamine synthetase/guanido kinase, catalytic domain"/>
    <property type="match status" value="1"/>
</dbReference>
<dbReference type="InterPro" id="IPR040577">
    <property type="entry name" value="Gln-synt_C"/>
</dbReference>
<dbReference type="InterPro" id="IPR008147">
    <property type="entry name" value="Gln_synt_N"/>
</dbReference>
<dbReference type="InterPro" id="IPR014746">
    <property type="entry name" value="Gln_synth/guanido_kin_cat_dom"/>
</dbReference>
<dbReference type="InterPro" id="IPR008146">
    <property type="entry name" value="Gln_synth_cat_dom"/>
</dbReference>
<dbReference type="InterPro" id="IPR027303">
    <property type="entry name" value="Gln_synth_gly_rich_site"/>
</dbReference>
<dbReference type="InterPro" id="IPR052725">
    <property type="entry name" value="GS_Type-3"/>
</dbReference>
<dbReference type="InterPro" id="IPR022147">
    <property type="entry name" value="GSIII_N"/>
</dbReference>
<dbReference type="PANTHER" id="PTHR42974">
    <property type="entry name" value="GLUTAMINE SYNTHETASE"/>
    <property type="match status" value="1"/>
</dbReference>
<dbReference type="PANTHER" id="PTHR42974:SF1">
    <property type="entry name" value="TYPE-3 GLUTAMINE SYNTHETASE"/>
    <property type="match status" value="1"/>
</dbReference>
<dbReference type="Pfam" id="PF00120">
    <property type="entry name" value="Gln-synt_C"/>
    <property type="match status" value="1"/>
</dbReference>
<dbReference type="Pfam" id="PF18318">
    <property type="entry name" value="Gln-synt_C-ter"/>
    <property type="match status" value="1"/>
</dbReference>
<dbReference type="Pfam" id="PF12437">
    <property type="entry name" value="GSIII_N"/>
    <property type="match status" value="1"/>
</dbReference>
<dbReference type="SMART" id="SM01230">
    <property type="entry name" value="Gln-synt_C"/>
    <property type="match status" value="1"/>
</dbReference>
<dbReference type="SUPFAM" id="SSF55931">
    <property type="entry name" value="Glutamine synthetase/guanido kinase"/>
    <property type="match status" value="1"/>
</dbReference>
<dbReference type="PROSITE" id="PS00181">
    <property type="entry name" value="GLNA_ATP"/>
    <property type="match status" value="1"/>
</dbReference>
<dbReference type="PROSITE" id="PS51986">
    <property type="entry name" value="GS_BETA_GRASP"/>
    <property type="match status" value="1"/>
</dbReference>
<dbReference type="PROSITE" id="PS51987">
    <property type="entry name" value="GS_CATALYTIC"/>
    <property type="match status" value="1"/>
</dbReference>